<reference key="1">
    <citation type="submission" date="2008-05" db="EMBL/GenBank/DDBJ databases">
        <title>Complete genome sequence of Clostridium botulinum E3 str. Alaska E43.</title>
        <authorList>
            <person name="Brinkac L.M."/>
            <person name="Brown J.L."/>
            <person name="Bruce D."/>
            <person name="Detter C."/>
            <person name="Munk C."/>
            <person name="Smith L.A."/>
            <person name="Smith T.J."/>
            <person name="Sutton G."/>
            <person name="Brettin T.S."/>
        </authorList>
    </citation>
    <scope>NUCLEOTIDE SEQUENCE [LARGE SCALE GENOMIC DNA]</scope>
    <source>
        <strain>Alaska E43 / Type E3</strain>
    </source>
</reference>
<keyword id="KW-0963">Cytoplasm</keyword>
<keyword id="KW-0238">DNA-binding</keyword>
<keyword id="KW-0677">Repeat</keyword>
<keyword id="KW-0804">Transcription</keyword>
<keyword id="KW-0805">Transcription regulation</keyword>
<proteinExistence type="inferred from homology"/>
<protein>
    <recommendedName>
        <fullName>Transcriptional regulator MraZ</fullName>
    </recommendedName>
</protein>
<organism>
    <name type="scientific">Clostridium botulinum (strain Alaska E43 / Type E3)</name>
    <dbReference type="NCBI Taxonomy" id="508767"/>
    <lineage>
        <taxon>Bacteria</taxon>
        <taxon>Bacillati</taxon>
        <taxon>Bacillota</taxon>
        <taxon>Clostridia</taxon>
        <taxon>Eubacteriales</taxon>
        <taxon>Clostridiaceae</taxon>
        <taxon>Clostridium</taxon>
    </lineage>
</organism>
<comment type="subunit">
    <text evidence="1">Forms oligomers.</text>
</comment>
<comment type="subcellular location">
    <subcellularLocation>
        <location evidence="1">Cytoplasm</location>
        <location evidence="1">Nucleoid</location>
    </subcellularLocation>
</comment>
<comment type="similarity">
    <text evidence="1">Belongs to the MraZ family.</text>
</comment>
<dbReference type="EMBL" id="CP001078">
    <property type="protein sequence ID" value="ACD52127.1"/>
    <property type="molecule type" value="Genomic_DNA"/>
</dbReference>
<dbReference type="RefSeq" id="WP_003372865.1">
    <property type="nucleotide sequence ID" value="NC_010723.1"/>
</dbReference>
<dbReference type="SMR" id="B2V4W1"/>
<dbReference type="KEGG" id="cbt:CLH_2214"/>
<dbReference type="HOGENOM" id="CLU_107907_0_5_9"/>
<dbReference type="GO" id="GO:0005737">
    <property type="term" value="C:cytoplasm"/>
    <property type="evidence" value="ECO:0007669"/>
    <property type="project" value="UniProtKB-UniRule"/>
</dbReference>
<dbReference type="GO" id="GO:0009295">
    <property type="term" value="C:nucleoid"/>
    <property type="evidence" value="ECO:0007669"/>
    <property type="project" value="UniProtKB-SubCell"/>
</dbReference>
<dbReference type="GO" id="GO:0003700">
    <property type="term" value="F:DNA-binding transcription factor activity"/>
    <property type="evidence" value="ECO:0007669"/>
    <property type="project" value="UniProtKB-UniRule"/>
</dbReference>
<dbReference type="GO" id="GO:0000976">
    <property type="term" value="F:transcription cis-regulatory region binding"/>
    <property type="evidence" value="ECO:0007669"/>
    <property type="project" value="TreeGrafter"/>
</dbReference>
<dbReference type="GO" id="GO:2000143">
    <property type="term" value="P:negative regulation of DNA-templated transcription initiation"/>
    <property type="evidence" value="ECO:0007669"/>
    <property type="project" value="TreeGrafter"/>
</dbReference>
<dbReference type="CDD" id="cd16321">
    <property type="entry name" value="MraZ_C"/>
    <property type="match status" value="1"/>
</dbReference>
<dbReference type="CDD" id="cd16320">
    <property type="entry name" value="MraZ_N"/>
    <property type="match status" value="1"/>
</dbReference>
<dbReference type="FunFam" id="3.40.1550.20:FF:000002">
    <property type="entry name" value="Transcriptional regulator MraZ"/>
    <property type="match status" value="1"/>
</dbReference>
<dbReference type="Gene3D" id="3.40.1550.20">
    <property type="entry name" value="Transcriptional regulator MraZ domain"/>
    <property type="match status" value="1"/>
</dbReference>
<dbReference type="HAMAP" id="MF_01008">
    <property type="entry name" value="MraZ"/>
    <property type="match status" value="1"/>
</dbReference>
<dbReference type="InterPro" id="IPR003444">
    <property type="entry name" value="MraZ"/>
</dbReference>
<dbReference type="InterPro" id="IPR035644">
    <property type="entry name" value="MraZ_C"/>
</dbReference>
<dbReference type="InterPro" id="IPR020603">
    <property type="entry name" value="MraZ_dom"/>
</dbReference>
<dbReference type="InterPro" id="IPR035642">
    <property type="entry name" value="MraZ_N"/>
</dbReference>
<dbReference type="InterPro" id="IPR038619">
    <property type="entry name" value="MraZ_sf"/>
</dbReference>
<dbReference type="InterPro" id="IPR007159">
    <property type="entry name" value="SpoVT-AbrB_dom"/>
</dbReference>
<dbReference type="InterPro" id="IPR037914">
    <property type="entry name" value="SpoVT-AbrB_sf"/>
</dbReference>
<dbReference type="NCBIfam" id="TIGR00242">
    <property type="entry name" value="division/cell wall cluster transcriptional repressor MraZ"/>
    <property type="match status" value="1"/>
</dbReference>
<dbReference type="PANTHER" id="PTHR34701">
    <property type="entry name" value="TRANSCRIPTIONAL REGULATOR MRAZ"/>
    <property type="match status" value="1"/>
</dbReference>
<dbReference type="PANTHER" id="PTHR34701:SF1">
    <property type="entry name" value="TRANSCRIPTIONAL REGULATOR MRAZ"/>
    <property type="match status" value="1"/>
</dbReference>
<dbReference type="Pfam" id="PF02381">
    <property type="entry name" value="MraZ"/>
    <property type="match status" value="2"/>
</dbReference>
<dbReference type="SUPFAM" id="SSF89447">
    <property type="entry name" value="AbrB/MazE/MraZ-like"/>
    <property type="match status" value="1"/>
</dbReference>
<dbReference type="PROSITE" id="PS51740">
    <property type="entry name" value="SPOVT_ABRB"/>
    <property type="match status" value="2"/>
</dbReference>
<evidence type="ECO:0000255" key="1">
    <source>
        <dbReference type="HAMAP-Rule" id="MF_01008"/>
    </source>
</evidence>
<evidence type="ECO:0000255" key="2">
    <source>
        <dbReference type="PROSITE-ProRule" id="PRU01076"/>
    </source>
</evidence>
<name>MRAZ_CLOBA</name>
<accession>B2V4W1</accession>
<feature type="chain" id="PRO_1000134781" description="Transcriptional regulator MraZ">
    <location>
        <begin position="1"/>
        <end position="142"/>
    </location>
</feature>
<feature type="domain" description="SpoVT-AbrB 1" evidence="2">
    <location>
        <begin position="5"/>
        <end position="47"/>
    </location>
</feature>
<feature type="domain" description="SpoVT-AbrB 2" evidence="2">
    <location>
        <begin position="76"/>
        <end position="119"/>
    </location>
</feature>
<sequence>MFIGEYQHSLDSKNRMIVPVKLREDLGEKFVITKGLDGCIYAYTINEWGILENKLKTLPLTNRDARAFVRFFFSGACIVELDKQGRGLIPQNLKEYAGIEKDIVSIGVLSRVEIWSREKWSNYNESDIDYDLIAEKMNDLGI</sequence>
<gene>
    <name evidence="1" type="primary">mraZ</name>
    <name type="ordered locus">CLH_2214</name>
</gene>